<dbReference type="EC" id="1.17.99.9" evidence="1"/>
<dbReference type="EMBL" id="CP000848">
    <property type="protein sequence ID" value="ABV75955.1"/>
    <property type="status" value="ALT_INIT"/>
    <property type="molecule type" value="Genomic_DNA"/>
</dbReference>
<dbReference type="RefSeq" id="WP_012262286.1">
    <property type="nucleotide sequence ID" value="NZ_CP121767.1"/>
</dbReference>
<dbReference type="SMR" id="A8GRD0"/>
<dbReference type="GeneID" id="79937119"/>
<dbReference type="KEGG" id="rri:A1G_01955"/>
<dbReference type="HOGENOM" id="CLU_017627_0_0_5"/>
<dbReference type="UniPathway" id="UPA00269">
    <property type="reaction ID" value="UER00713"/>
</dbReference>
<dbReference type="Proteomes" id="UP000006832">
    <property type="component" value="Chromosome"/>
</dbReference>
<dbReference type="GO" id="GO:0005886">
    <property type="term" value="C:plasma membrane"/>
    <property type="evidence" value="ECO:0007669"/>
    <property type="project" value="UniProtKB-SubCell"/>
</dbReference>
<dbReference type="GO" id="GO:0046872">
    <property type="term" value="F:metal ion binding"/>
    <property type="evidence" value="ECO:0007669"/>
    <property type="project" value="UniProtKB-KW"/>
</dbReference>
<dbReference type="GO" id="GO:0016653">
    <property type="term" value="F:oxidoreductase activity, acting on NAD(P)H, heme protein as acceptor"/>
    <property type="evidence" value="ECO:0007669"/>
    <property type="project" value="InterPro"/>
</dbReference>
<dbReference type="GO" id="GO:0006784">
    <property type="term" value="P:heme A biosynthetic process"/>
    <property type="evidence" value="ECO:0007669"/>
    <property type="project" value="UniProtKB-UniRule"/>
</dbReference>
<dbReference type="HAMAP" id="MF_01665">
    <property type="entry name" value="HemeA_synth_type2"/>
    <property type="match status" value="1"/>
</dbReference>
<dbReference type="InterPro" id="IPR003780">
    <property type="entry name" value="COX15/CtaA_fam"/>
</dbReference>
<dbReference type="InterPro" id="IPR023754">
    <property type="entry name" value="HemeA_Synthase_type2"/>
</dbReference>
<dbReference type="PANTHER" id="PTHR23289">
    <property type="entry name" value="CYTOCHROME C OXIDASE ASSEMBLY PROTEIN COX15"/>
    <property type="match status" value="1"/>
</dbReference>
<dbReference type="PANTHER" id="PTHR23289:SF2">
    <property type="entry name" value="CYTOCHROME C OXIDASE ASSEMBLY PROTEIN COX15 HOMOLOG"/>
    <property type="match status" value="1"/>
</dbReference>
<dbReference type="Pfam" id="PF02628">
    <property type="entry name" value="COX15-CtaA"/>
    <property type="match status" value="1"/>
</dbReference>
<feature type="chain" id="PRO_0000349080" description="Heme A synthase">
    <location>
        <begin position="1"/>
        <end position="337"/>
    </location>
</feature>
<feature type="transmembrane region" description="Helical" evidence="1">
    <location>
        <begin position="6"/>
        <end position="26"/>
    </location>
</feature>
<feature type="transmembrane region" description="Helical" evidence="1">
    <location>
        <begin position="87"/>
        <end position="107"/>
    </location>
</feature>
<feature type="transmembrane region" description="Helical" evidence="1">
    <location>
        <begin position="119"/>
        <end position="139"/>
    </location>
</feature>
<feature type="transmembrane region" description="Helical" evidence="1">
    <location>
        <begin position="154"/>
        <end position="174"/>
    </location>
</feature>
<feature type="transmembrane region" description="Helical" evidence="1">
    <location>
        <begin position="192"/>
        <end position="212"/>
    </location>
</feature>
<feature type="transmembrane region" description="Helical" evidence="1">
    <location>
        <begin position="258"/>
        <end position="278"/>
    </location>
</feature>
<feature type="transmembrane region" description="Helical" evidence="1">
    <location>
        <begin position="285"/>
        <end position="305"/>
    </location>
</feature>
<feature type="transmembrane region" description="Helical" evidence="1">
    <location>
        <begin position="308"/>
        <end position="328"/>
    </location>
</feature>
<feature type="binding site" description="axial binding residue" evidence="1">
    <location>
        <position position="256"/>
    </location>
    <ligand>
        <name>heme</name>
        <dbReference type="ChEBI" id="CHEBI:30413"/>
    </ligand>
    <ligandPart>
        <name>Fe</name>
        <dbReference type="ChEBI" id="CHEBI:18248"/>
    </ligandPart>
</feature>
<feature type="binding site" description="axial binding residue" evidence="1">
    <location>
        <position position="316"/>
    </location>
    <ligand>
        <name>heme</name>
        <dbReference type="ChEBI" id="CHEBI:30413"/>
    </ligand>
    <ligandPart>
        <name>Fe</name>
        <dbReference type="ChEBI" id="CHEBI:18248"/>
    </ligandPart>
</feature>
<comment type="function">
    <text evidence="1">Catalyzes the conversion of heme O to heme A by two successive hydroxylations of the methyl group at C8. The first hydroxylation forms heme I, the second hydroxylation results in an unstable dihydroxymethyl group, which spontaneously dehydrates, resulting in the formyl group of heme A.</text>
</comment>
<comment type="catalytic activity">
    <reaction evidence="1">
        <text>Fe(II)-heme o + 2 A + H2O = Fe(II)-heme a + 2 AH2</text>
        <dbReference type="Rhea" id="RHEA:63388"/>
        <dbReference type="ChEBI" id="CHEBI:13193"/>
        <dbReference type="ChEBI" id="CHEBI:15377"/>
        <dbReference type="ChEBI" id="CHEBI:17499"/>
        <dbReference type="ChEBI" id="CHEBI:60530"/>
        <dbReference type="ChEBI" id="CHEBI:61715"/>
        <dbReference type="EC" id="1.17.99.9"/>
    </reaction>
    <physiologicalReaction direction="left-to-right" evidence="1">
        <dbReference type="Rhea" id="RHEA:63389"/>
    </physiologicalReaction>
</comment>
<comment type="cofactor">
    <cofactor evidence="1">
        <name>heme b</name>
        <dbReference type="ChEBI" id="CHEBI:60344"/>
    </cofactor>
</comment>
<comment type="pathway">
    <text evidence="1">Porphyrin-containing compound metabolism; heme A biosynthesis; heme A from heme O: step 1/1.</text>
</comment>
<comment type="subunit">
    <text evidence="1">Interacts with CtaB.</text>
</comment>
<comment type="subcellular location">
    <subcellularLocation>
        <location evidence="1">Cell membrane</location>
        <topology evidence="1">Multi-pass membrane protein</topology>
    </subcellularLocation>
</comment>
<comment type="similarity">
    <text evidence="1">Belongs to the COX15/CtaA family. Type 2 subfamily.</text>
</comment>
<comment type="sequence caution" evidence="2">
    <conflict type="erroneous initiation">
        <sequence resource="EMBL-CDS" id="ABV75955"/>
    </conflict>
</comment>
<evidence type="ECO:0000255" key="1">
    <source>
        <dbReference type="HAMAP-Rule" id="MF_01665"/>
    </source>
</evidence>
<evidence type="ECO:0000305" key="2"/>
<protein>
    <recommendedName>
        <fullName evidence="1">Heme A synthase</fullName>
        <shortName evidence="1">HAS</shortName>
        <ecNumber evidence="1">1.17.99.9</ecNumber>
    </recommendedName>
    <alternativeName>
        <fullName evidence="1">Cytochrome aa3-controlling protein</fullName>
    </alternativeName>
</protein>
<name>CTAA_RICRS</name>
<gene>
    <name evidence="1" type="primary">ctaA</name>
    <name type="ordered locus">A1G_01955</name>
</gene>
<reference key="1">
    <citation type="submission" date="2007-09" db="EMBL/GenBank/DDBJ databases">
        <title>Complete genome sequence of Rickettsia rickettsii.</title>
        <authorList>
            <person name="Madan A."/>
            <person name="Fahey J."/>
            <person name="Helton E."/>
            <person name="Ketteman M."/>
            <person name="Madan A."/>
            <person name="Rodrigues S."/>
            <person name="Sanchez A."/>
            <person name="Dasch G."/>
            <person name="Eremeeva M."/>
        </authorList>
    </citation>
    <scope>NUCLEOTIDE SEQUENCE [LARGE SCALE GENOMIC DNA]</scope>
    <source>
        <strain>Sheila Smith</strain>
    </source>
</reference>
<keyword id="KW-1003">Cell membrane</keyword>
<keyword id="KW-0350">Heme biosynthesis</keyword>
<keyword id="KW-0408">Iron</keyword>
<keyword id="KW-0472">Membrane</keyword>
<keyword id="KW-0479">Metal-binding</keyword>
<keyword id="KW-0560">Oxidoreductase</keyword>
<keyword id="KW-0812">Transmembrane</keyword>
<keyword id="KW-1133">Transmembrane helix</keyword>
<sequence length="337" mass="38925">MQKSLITKWLCINCIMVIATIVIGGITRLTGSGLSIVEWRPVTGILPPFSFESWQSEFAKYKAFPEYNSVNYGITLSQFKFIYLLEFIHRLLGRITALIYIVPVIYFYFKDVIKNRDMLPYIIALLLFCVQGFIGWYMVKSGLLNSPYVSHFRLAFHLIIAVIIYHILFYQLIKNRCDILLIPSQTDFKLPLIFSGIAITVVYVQIFLGALVAGLDAGLIYNSFPLMDDRFIPMEIKDNFFDLKNWYDPVFIQFIHRLVGYSVFLVVVVLIICLLKIEHPKLNKIAYFLMIALFMQVSTGIITLLYSVPIIIASIHQLFAIILLSVIIWCYFLIKSF</sequence>
<organism>
    <name type="scientific">Rickettsia rickettsii (strain Sheila Smith)</name>
    <dbReference type="NCBI Taxonomy" id="392021"/>
    <lineage>
        <taxon>Bacteria</taxon>
        <taxon>Pseudomonadati</taxon>
        <taxon>Pseudomonadota</taxon>
        <taxon>Alphaproteobacteria</taxon>
        <taxon>Rickettsiales</taxon>
        <taxon>Rickettsiaceae</taxon>
        <taxon>Rickettsieae</taxon>
        <taxon>Rickettsia</taxon>
        <taxon>spotted fever group</taxon>
    </lineage>
</organism>
<proteinExistence type="inferred from homology"/>
<accession>A8GRD0</accession>